<accession>Q9LPX2</accession>
<dbReference type="EMBL" id="AC012187">
    <property type="protein sequence ID" value="AAF78482.1"/>
    <property type="molecule type" value="Genomic_DNA"/>
</dbReference>
<dbReference type="EMBL" id="CP002684">
    <property type="protein sequence ID" value="AEE28927.1"/>
    <property type="molecule type" value="Genomic_DNA"/>
</dbReference>
<dbReference type="PIR" id="A86261">
    <property type="entry name" value="A86261"/>
</dbReference>
<dbReference type="RefSeq" id="NP_001031033.1">
    <property type="nucleotide sequence ID" value="NM_001035956.2"/>
</dbReference>
<dbReference type="SMR" id="Q9LPX2"/>
<dbReference type="FunCoup" id="Q9LPX2">
    <property type="interactions" value="43"/>
</dbReference>
<dbReference type="STRING" id="3702.Q9LPX2"/>
<dbReference type="PaxDb" id="3702-AT1G12775.1"/>
<dbReference type="ProteomicsDB" id="234832"/>
<dbReference type="EnsemblPlants" id="AT1G12775.1">
    <property type="protein sequence ID" value="AT1G12775.1"/>
    <property type="gene ID" value="AT1G12775"/>
</dbReference>
<dbReference type="GeneID" id="3766712"/>
<dbReference type="Gramene" id="AT1G12775.1">
    <property type="protein sequence ID" value="AT1G12775.1"/>
    <property type="gene ID" value="AT1G12775"/>
</dbReference>
<dbReference type="KEGG" id="ath:AT1G12775"/>
<dbReference type="Araport" id="AT1G12775"/>
<dbReference type="TAIR" id="AT1G12775"/>
<dbReference type="eggNOG" id="KOG4197">
    <property type="taxonomic scope" value="Eukaryota"/>
</dbReference>
<dbReference type="HOGENOM" id="CLU_002706_49_12_1"/>
<dbReference type="InParanoid" id="Q9LPX2"/>
<dbReference type="OMA" id="VSKECDP"/>
<dbReference type="PhylomeDB" id="Q9LPX2"/>
<dbReference type="PRO" id="PR:Q9LPX2"/>
<dbReference type="Proteomes" id="UP000006548">
    <property type="component" value="Chromosome 1"/>
</dbReference>
<dbReference type="ExpressionAtlas" id="Q9LPX2">
    <property type="expression patterns" value="baseline and differential"/>
</dbReference>
<dbReference type="GO" id="GO:0005739">
    <property type="term" value="C:mitochondrion"/>
    <property type="evidence" value="ECO:0007669"/>
    <property type="project" value="UniProtKB-SubCell"/>
</dbReference>
<dbReference type="FunFam" id="1.25.40.10:FF:003431">
    <property type="entry name" value="Pentatricopeptide repeat-containing protein At1g62670, mitochondrial"/>
    <property type="match status" value="1"/>
</dbReference>
<dbReference type="FunFam" id="1.25.40.10:FF:000558">
    <property type="entry name" value="Pentatricopeptide repeat-containing protein At5g39710"/>
    <property type="match status" value="1"/>
</dbReference>
<dbReference type="Gene3D" id="1.25.40.10">
    <property type="entry name" value="Tetratricopeptide repeat domain"/>
    <property type="match status" value="5"/>
</dbReference>
<dbReference type="InterPro" id="IPR002885">
    <property type="entry name" value="Pentatricopeptide_rpt"/>
</dbReference>
<dbReference type="InterPro" id="IPR011990">
    <property type="entry name" value="TPR-like_helical_dom_sf"/>
</dbReference>
<dbReference type="NCBIfam" id="TIGR00756">
    <property type="entry name" value="PPR"/>
    <property type="match status" value="14"/>
</dbReference>
<dbReference type="PANTHER" id="PTHR47941">
    <property type="entry name" value="PENTATRICOPEPTIDE REPEAT-CONTAINING PROTEIN 3, MITOCHONDRIAL"/>
    <property type="match status" value="1"/>
</dbReference>
<dbReference type="Pfam" id="PF01535">
    <property type="entry name" value="PPR"/>
    <property type="match status" value="1"/>
</dbReference>
<dbReference type="Pfam" id="PF12854">
    <property type="entry name" value="PPR_1"/>
    <property type="match status" value="2"/>
</dbReference>
<dbReference type="Pfam" id="PF13041">
    <property type="entry name" value="PPR_2"/>
    <property type="match status" value="6"/>
</dbReference>
<dbReference type="PROSITE" id="PS51375">
    <property type="entry name" value="PPR"/>
    <property type="match status" value="15"/>
</dbReference>
<reference key="1">
    <citation type="journal article" date="2000" name="Nature">
        <title>Sequence and analysis of chromosome 1 of the plant Arabidopsis thaliana.</title>
        <authorList>
            <person name="Theologis A."/>
            <person name="Ecker J.R."/>
            <person name="Palm C.J."/>
            <person name="Federspiel N.A."/>
            <person name="Kaul S."/>
            <person name="White O."/>
            <person name="Alonso J."/>
            <person name="Altafi H."/>
            <person name="Araujo R."/>
            <person name="Bowman C.L."/>
            <person name="Brooks S.Y."/>
            <person name="Buehler E."/>
            <person name="Chan A."/>
            <person name="Chao Q."/>
            <person name="Chen H."/>
            <person name="Cheuk R.F."/>
            <person name="Chin C.W."/>
            <person name="Chung M.K."/>
            <person name="Conn L."/>
            <person name="Conway A.B."/>
            <person name="Conway A.R."/>
            <person name="Creasy T.H."/>
            <person name="Dewar K."/>
            <person name="Dunn P."/>
            <person name="Etgu P."/>
            <person name="Feldblyum T.V."/>
            <person name="Feng J.-D."/>
            <person name="Fong B."/>
            <person name="Fujii C.Y."/>
            <person name="Gill J.E."/>
            <person name="Goldsmith A.D."/>
            <person name="Haas B."/>
            <person name="Hansen N.F."/>
            <person name="Hughes B."/>
            <person name="Huizar L."/>
            <person name="Hunter J.L."/>
            <person name="Jenkins J."/>
            <person name="Johnson-Hopson C."/>
            <person name="Khan S."/>
            <person name="Khaykin E."/>
            <person name="Kim C.J."/>
            <person name="Koo H.L."/>
            <person name="Kremenetskaia I."/>
            <person name="Kurtz D.B."/>
            <person name="Kwan A."/>
            <person name="Lam B."/>
            <person name="Langin-Hooper S."/>
            <person name="Lee A."/>
            <person name="Lee J.M."/>
            <person name="Lenz C.A."/>
            <person name="Li J.H."/>
            <person name="Li Y.-P."/>
            <person name="Lin X."/>
            <person name="Liu S.X."/>
            <person name="Liu Z.A."/>
            <person name="Luros J.S."/>
            <person name="Maiti R."/>
            <person name="Marziali A."/>
            <person name="Militscher J."/>
            <person name="Miranda M."/>
            <person name="Nguyen M."/>
            <person name="Nierman W.C."/>
            <person name="Osborne B.I."/>
            <person name="Pai G."/>
            <person name="Peterson J."/>
            <person name="Pham P.K."/>
            <person name="Rizzo M."/>
            <person name="Rooney T."/>
            <person name="Rowley D."/>
            <person name="Sakano H."/>
            <person name="Salzberg S.L."/>
            <person name="Schwartz J.R."/>
            <person name="Shinn P."/>
            <person name="Southwick A.M."/>
            <person name="Sun H."/>
            <person name="Tallon L.J."/>
            <person name="Tambunga G."/>
            <person name="Toriumi M.J."/>
            <person name="Town C.D."/>
            <person name="Utterback T."/>
            <person name="Van Aken S."/>
            <person name="Vaysberg M."/>
            <person name="Vysotskaia V.S."/>
            <person name="Walker M."/>
            <person name="Wu D."/>
            <person name="Yu G."/>
            <person name="Fraser C.M."/>
            <person name="Venter J.C."/>
            <person name="Davis R.W."/>
        </authorList>
    </citation>
    <scope>NUCLEOTIDE SEQUENCE [LARGE SCALE GENOMIC DNA]</scope>
    <source>
        <strain>cv. Columbia</strain>
    </source>
</reference>
<reference key="2">
    <citation type="journal article" date="2017" name="Plant J.">
        <title>Araport11: a complete reannotation of the Arabidopsis thaliana reference genome.</title>
        <authorList>
            <person name="Cheng C.Y."/>
            <person name="Krishnakumar V."/>
            <person name="Chan A.P."/>
            <person name="Thibaud-Nissen F."/>
            <person name="Schobel S."/>
            <person name="Town C.D."/>
        </authorList>
    </citation>
    <scope>GENOME REANNOTATION</scope>
    <source>
        <strain>cv. Columbia</strain>
    </source>
</reference>
<reference key="3">
    <citation type="journal article" date="2004" name="Plant Cell">
        <title>Genome-wide analysis of Arabidopsis pentatricopeptide repeat proteins reveals their essential role in organelle biogenesis.</title>
        <authorList>
            <person name="Lurin C."/>
            <person name="Andres C."/>
            <person name="Aubourg S."/>
            <person name="Bellaoui M."/>
            <person name="Bitton F."/>
            <person name="Bruyere C."/>
            <person name="Caboche M."/>
            <person name="Debast C."/>
            <person name="Gualberto J."/>
            <person name="Hoffmann B."/>
            <person name="Lecharny A."/>
            <person name="Le Ret M."/>
            <person name="Martin-Magniette M.-L."/>
            <person name="Mireau H."/>
            <person name="Peeters N."/>
            <person name="Renou J.-P."/>
            <person name="Szurek B."/>
            <person name="Taconnat L."/>
            <person name="Small I."/>
        </authorList>
    </citation>
    <scope>GENE FAMILY</scope>
</reference>
<name>PPR39_ARATH</name>
<protein>
    <recommendedName>
        <fullName>Pentatricopeptide repeat-containing protein At1g12775, mitochondrial</fullName>
    </recommendedName>
</protein>
<evidence type="ECO:0000255" key="1"/>
<evidence type="ECO:0000305" key="2"/>
<organism>
    <name type="scientific">Arabidopsis thaliana</name>
    <name type="common">Mouse-ear cress</name>
    <dbReference type="NCBI Taxonomy" id="3702"/>
    <lineage>
        <taxon>Eukaryota</taxon>
        <taxon>Viridiplantae</taxon>
        <taxon>Streptophyta</taxon>
        <taxon>Embryophyta</taxon>
        <taxon>Tracheophyta</taxon>
        <taxon>Spermatophyta</taxon>
        <taxon>Magnoliopsida</taxon>
        <taxon>eudicotyledons</taxon>
        <taxon>Gunneridae</taxon>
        <taxon>Pentapetalae</taxon>
        <taxon>rosids</taxon>
        <taxon>malvids</taxon>
        <taxon>Brassicales</taxon>
        <taxon>Brassicaceae</taxon>
        <taxon>Camelineae</taxon>
        <taxon>Arabidopsis</taxon>
    </lineage>
</organism>
<keyword id="KW-0496">Mitochondrion</keyword>
<keyword id="KW-1185">Reference proteome</keyword>
<keyword id="KW-0677">Repeat</keyword>
<keyword id="KW-0809">Transit peptide</keyword>
<feature type="transit peptide" description="Mitochondrion" evidence="1">
    <location>
        <begin position="1"/>
        <end position="53"/>
    </location>
</feature>
<feature type="chain" id="PRO_0000342780" description="Pentatricopeptide repeat-containing protein At1g12775, mitochondrial">
    <location>
        <begin position="54"/>
        <end position="644"/>
    </location>
</feature>
<feature type="repeat" description="PPR 1">
    <location>
        <begin position="87"/>
        <end position="121"/>
    </location>
</feature>
<feature type="repeat" description="PPR 2">
    <location>
        <begin position="122"/>
        <end position="156"/>
    </location>
</feature>
<feature type="repeat" description="PPR 3">
    <location>
        <begin position="157"/>
        <end position="191"/>
    </location>
</feature>
<feature type="repeat" description="PPR 4">
    <location>
        <begin position="192"/>
        <end position="226"/>
    </location>
</feature>
<feature type="repeat" description="PPR 5">
    <location>
        <begin position="227"/>
        <end position="261"/>
    </location>
</feature>
<feature type="repeat" description="PPR 6">
    <location>
        <begin position="262"/>
        <end position="296"/>
    </location>
</feature>
<feature type="repeat" description="PPR 7">
    <location>
        <begin position="297"/>
        <end position="331"/>
    </location>
</feature>
<feature type="repeat" description="PPR 8">
    <location>
        <begin position="332"/>
        <end position="366"/>
    </location>
</feature>
<feature type="repeat" description="PPR 9">
    <location>
        <begin position="367"/>
        <end position="401"/>
    </location>
</feature>
<feature type="repeat" description="PPR 10">
    <location>
        <begin position="402"/>
        <end position="436"/>
    </location>
</feature>
<feature type="repeat" description="PPR 11">
    <location>
        <begin position="437"/>
        <end position="471"/>
    </location>
</feature>
<feature type="repeat" description="PPR 12">
    <location>
        <begin position="472"/>
        <end position="506"/>
    </location>
</feature>
<feature type="repeat" description="PPR 13">
    <location>
        <begin position="507"/>
        <end position="541"/>
    </location>
</feature>
<feature type="repeat" description="PPR 14">
    <location>
        <begin position="542"/>
        <end position="576"/>
    </location>
</feature>
<feature type="repeat" description="PPR 15">
    <location>
        <begin position="577"/>
        <end position="611"/>
    </location>
</feature>
<proteinExistence type="evidence at transcript level"/>
<gene>
    <name type="ordered locus">At1g12775</name>
    <name type="ORF">F13K23.2</name>
</gene>
<comment type="subcellular location">
    <subcellularLocation>
        <location evidence="2">Mitochondrion</location>
    </subcellularLocation>
</comment>
<comment type="similarity">
    <text evidence="2">Belongs to the PPR family. P subfamily.</text>
</comment>
<comment type="online information" name="Pentatricopeptide repeat proteins">
    <link uri="https://ppr.plantenergy.uwa.edu.au"/>
</comment>
<sequence length="644" mass="72325">MVRMMIRRLSSQASRFVQPRLLETGTLRIALINCPNELLFCCERGFSTFSDRNLSYRDKLSSGLVGIKADDAVDLFRDMIQSRPLPTVIDFNRLFSAIAKTKQYELVLALCKQMESKGIAHSIYTLSIMINCFCRCRKLSYAFSTMGKIMKLGYEPDTVIFNTLLNGLCLECRVSEALELVDRMVEMGHKPTLITLNTLVNGLCLNGKVSDAVVLIDRMVETGFQPNEVTYGPVLNVMCKSGQTALAMELLRKMEERNIKLDAVKYSIIIDGLCKDGSLDNAFNLFNEMEIKGFKADIITYNTLIGGFCNAGRWDDGAKLLRDMIKRKISPNVVTFSVLIDSFVKEGKLREADQLLKEMMQRGIAPNTITYNSLIDGFCKENRLEEAIQMVDLMISKGCDPDIMTFNILINGYCKANRIDDGLELFREMSLRGVIANTVTYNTLVQGFCQSGKLEVAKKLFQEMVSRRVRPDIVSYKILLDGLCDNGELEKALEIFGKIEKSKMELDIGIYMIIIHGMCNASKVDDAWDLFCSLPLKGVKLDARAYNIMISELCRKDSLSKADILFRKMTEEGHAPDELTYNILIRAHLGDDDATTAAELIEEMKSSGFPADVSTVKMVINMLSSGELDKSFLDMLSTTRASLK</sequence>